<accession>Q03196</accession>
<evidence type="ECO:0000305" key="1"/>
<comment type="tissue specificity">
    <text>In tubers of untreated plants. After ABA treatment or mechanical wounding is mostly accumulated in leaves, to a lesser extent in stems, but not in roots.</text>
</comment>
<comment type="induction">
    <text>By abscisic acid (ABA), jasmonic acid (JA) and wounding.</text>
</comment>
<comment type="similarity">
    <text evidence="1">Belongs to the cystatin family. Phytocystatin subfamily.</text>
</comment>
<gene>
    <name type="primary">CYS-PIN</name>
</gene>
<feature type="chain" id="PRO_0000207158" description="Cysteine proteinase inhibitor">
    <location>
        <begin position="1" status="less than"/>
        <end position="66"/>
    </location>
</feature>
<feature type="short sequence motif" description="Secondary area of contact">
    <location>
        <begin position="18"/>
        <end position="22"/>
    </location>
</feature>
<feature type="non-terminal residue">
    <location>
        <position position="1"/>
    </location>
</feature>
<reference key="1">
    <citation type="journal article" date="1992" name="Plant Cell">
        <title>General roles of abscisic and jasmonic acids in gene activation as a result of mechanical wounding.</title>
        <authorList>
            <person name="Hildmann T."/>
            <person name="Ebneth M."/>
            <person name="Pena-Cortes H."/>
            <person name="Sanchez-Serrano J.J."/>
            <person name="Willmitzer L."/>
            <person name="Prat S."/>
        </authorList>
    </citation>
    <scope>NUCLEOTIDE SEQUENCE [MRNA]</scope>
    <source>
        <strain>cv. Desiree</strain>
        <tissue>Leaf</tissue>
    </source>
</reference>
<name>CYT_SOLTU</name>
<keyword id="KW-0646">Protease inhibitor</keyword>
<keyword id="KW-1185">Reference proteome</keyword>
<keyword id="KW-0346">Stress response</keyword>
<keyword id="KW-0789">Thiol protease inhibitor</keyword>
<organism>
    <name type="scientific">Solanum tuberosum</name>
    <name type="common">Potato</name>
    <dbReference type="NCBI Taxonomy" id="4113"/>
    <lineage>
        <taxon>Eukaryota</taxon>
        <taxon>Viridiplantae</taxon>
        <taxon>Streptophyta</taxon>
        <taxon>Embryophyta</taxon>
        <taxon>Tracheophyta</taxon>
        <taxon>Spermatophyta</taxon>
        <taxon>Magnoliopsida</taxon>
        <taxon>eudicotyledons</taxon>
        <taxon>Gunneridae</taxon>
        <taxon>Pentapetalae</taxon>
        <taxon>asterids</taxon>
        <taxon>lamiids</taxon>
        <taxon>Solanales</taxon>
        <taxon>Solanaceae</taxon>
        <taxon>Solanoideae</taxon>
        <taxon>Solaneae</taxon>
        <taxon>Solanum</taxon>
    </lineage>
</organism>
<protein>
    <recommendedName>
        <fullName>Cysteine proteinase inhibitor</fullName>
    </recommendedName>
</protein>
<proteinExistence type="evidence at transcript level"/>
<sequence length="66" mass="7906">QTQNAHLEFVEVLNVKEQVVAGMMYYITLVATDDGYKKIYKTKIWVKEWENFKEVQEFKQIVYATK</sequence>
<dbReference type="EMBL" id="X67844">
    <property type="protein sequence ID" value="CAA48037.1"/>
    <property type="molecule type" value="mRNA"/>
</dbReference>
<dbReference type="PIR" id="PQ0469">
    <property type="entry name" value="PQ0469"/>
</dbReference>
<dbReference type="SMR" id="Q03196"/>
<dbReference type="STRING" id="4113.Q03196"/>
<dbReference type="MEROPS" id="I25.040"/>
<dbReference type="PaxDb" id="4113-PGSC0003DMT400015254"/>
<dbReference type="eggNOG" id="ENOG502R76G">
    <property type="taxonomic scope" value="Eukaryota"/>
</dbReference>
<dbReference type="InParanoid" id="Q03196"/>
<dbReference type="Proteomes" id="UP000011115">
    <property type="component" value="Unassembled WGS sequence"/>
</dbReference>
<dbReference type="ExpressionAtlas" id="Q03196">
    <property type="expression patterns" value="baseline"/>
</dbReference>
<dbReference type="GO" id="GO:0004869">
    <property type="term" value="F:cysteine-type endopeptidase inhibitor activity"/>
    <property type="evidence" value="ECO:0000318"/>
    <property type="project" value="GO_Central"/>
</dbReference>
<dbReference type="CDD" id="cd00042">
    <property type="entry name" value="CY"/>
    <property type="match status" value="1"/>
</dbReference>
<dbReference type="Gene3D" id="3.10.450.10">
    <property type="match status" value="1"/>
</dbReference>
<dbReference type="InterPro" id="IPR027214">
    <property type="entry name" value="Cystatin"/>
</dbReference>
<dbReference type="InterPro" id="IPR000010">
    <property type="entry name" value="Cystatin_dom"/>
</dbReference>
<dbReference type="InterPro" id="IPR046350">
    <property type="entry name" value="Cystatin_sf"/>
</dbReference>
<dbReference type="InterPro" id="IPR018073">
    <property type="entry name" value="Prot_inh_cystat_CS"/>
</dbReference>
<dbReference type="PANTHER" id="PTHR11413">
    <property type="entry name" value="CYSTATIN FAMILY MEMBER"/>
    <property type="match status" value="1"/>
</dbReference>
<dbReference type="PANTHER" id="PTHR11413:SF116">
    <property type="entry name" value="MULTICYSTATIN"/>
    <property type="match status" value="1"/>
</dbReference>
<dbReference type="Pfam" id="PF00031">
    <property type="entry name" value="Cystatin"/>
    <property type="match status" value="1"/>
</dbReference>
<dbReference type="SUPFAM" id="SSF54403">
    <property type="entry name" value="Cystatin/monellin"/>
    <property type="match status" value="1"/>
</dbReference>
<dbReference type="PROSITE" id="PS00287">
    <property type="entry name" value="CYSTATIN"/>
    <property type="match status" value="1"/>
</dbReference>